<accession>P28402</accession>
<organism>
    <name type="scientific">Drimys winteri</name>
    <name type="common">Winter's bark</name>
    <name type="synonym">Drimys chilensis</name>
    <dbReference type="NCBI Taxonomy" id="3419"/>
    <lineage>
        <taxon>Eukaryota</taxon>
        <taxon>Viridiplantae</taxon>
        <taxon>Streptophyta</taxon>
        <taxon>Embryophyta</taxon>
        <taxon>Tracheophyta</taxon>
        <taxon>Spermatophyta</taxon>
        <taxon>Magnoliopsida</taxon>
        <taxon>Magnoliidae</taxon>
        <taxon>Canellales</taxon>
        <taxon>Winteraceae</taxon>
        <taxon>Drimys</taxon>
    </lineage>
</organism>
<reference key="1">
    <citation type="journal article" date="1992" name="Science">
        <title>Carnivorous plants: phylogeny and structural evolution.</title>
        <authorList>
            <person name="Albert V.A."/>
            <person name="Williams S.E."/>
            <person name="Chase M.W."/>
        </authorList>
    </citation>
    <scope>NUCLEOTIDE SEQUENCE [GENOMIC DNA]</scope>
</reference>
<sequence length="466" mass="51759">VGFKAGVKDYKLTYYTPDYETKDTDILAAFRVTPQPGVPPEEAGAAVAAESSTGTWTTVWTDGLTSLDRYKGRCYHIEPVAGEEDQYIAYVAYPLDLFEEGSVTNMFTSIVGNVFGFKALRALRLEDLRIPTAYVKTFQGPPHGIQVERDKLNKYGRPLLGCTIKPKLGLSAKNYGRAVYECLRGGLDFTKDDENVNSQPFMRWRDRFLFCAEALYKAQAETGEIKGHYLNATAGTCEEMMKRAVFARELGVPIVMHDYLTGGFTANTTLAHYCRDNGLLLHIHRAMHAVIDRQKNHGIHFRVLAKALRMSGGDHIHAGTVVGKLEGERDITLGFVDLLRDDFIQKDRSRGIYFTQDWVSMPGVLPVASGGIHVWHMPALTEIFGDDSVLQFGGGTLGHPWGNAPGAVANRVALEACVKARNEGRDLAREGNEIIREACKWSPELAAACEVWKEIKFEFKAVDTLD</sequence>
<evidence type="ECO:0000255" key="1">
    <source>
        <dbReference type="HAMAP-Rule" id="MF_01338"/>
    </source>
</evidence>
<keyword id="KW-0113">Calvin cycle</keyword>
<keyword id="KW-0120">Carbon dioxide fixation</keyword>
<keyword id="KW-0150">Chloroplast</keyword>
<keyword id="KW-1015">Disulfide bond</keyword>
<keyword id="KW-0456">Lyase</keyword>
<keyword id="KW-0460">Magnesium</keyword>
<keyword id="KW-0479">Metal-binding</keyword>
<keyword id="KW-0488">Methylation</keyword>
<keyword id="KW-0503">Monooxygenase</keyword>
<keyword id="KW-0560">Oxidoreductase</keyword>
<keyword id="KW-0601">Photorespiration</keyword>
<keyword id="KW-0602">Photosynthesis</keyword>
<keyword id="KW-0934">Plastid</keyword>
<gene>
    <name evidence="1" type="primary">rbcL</name>
</gene>
<name>RBL_DRIWI</name>
<feature type="chain" id="PRO_0000062445" description="Ribulose bisphosphate carboxylase large chain">
    <location>
        <begin position="1" status="less than"/>
        <end position="466"/>
    </location>
</feature>
<feature type="active site" description="Proton acceptor" evidence="1">
    <location>
        <position position="165"/>
    </location>
</feature>
<feature type="active site" description="Proton acceptor" evidence="1">
    <location>
        <position position="284"/>
    </location>
</feature>
<feature type="binding site" description="in homodimeric partner" evidence="1">
    <location>
        <position position="113"/>
    </location>
    <ligand>
        <name>substrate</name>
    </ligand>
</feature>
<feature type="binding site" evidence="1">
    <location>
        <position position="163"/>
    </location>
    <ligand>
        <name>substrate</name>
    </ligand>
</feature>
<feature type="binding site" evidence="1">
    <location>
        <position position="167"/>
    </location>
    <ligand>
        <name>substrate</name>
    </ligand>
</feature>
<feature type="binding site" description="via carbamate group" evidence="1">
    <location>
        <position position="191"/>
    </location>
    <ligand>
        <name>Mg(2+)</name>
        <dbReference type="ChEBI" id="CHEBI:18420"/>
    </ligand>
</feature>
<feature type="binding site" evidence="1">
    <location>
        <position position="193"/>
    </location>
    <ligand>
        <name>Mg(2+)</name>
        <dbReference type="ChEBI" id="CHEBI:18420"/>
    </ligand>
</feature>
<feature type="binding site" evidence="1">
    <location>
        <position position="194"/>
    </location>
    <ligand>
        <name>Mg(2+)</name>
        <dbReference type="ChEBI" id="CHEBI:18420"/>
    </ligand>
</feature>
<feature type="binding site" evidence="1">
    <location>
        <position position="285"/>
    </location>
    <ligand>
        <name>substrate</name>
    </ligand>
</feature>
<feature type="binding site" evidence="1">
    <location>
        <position position="317"/>
    </location>
    <ligand>
        <name>substrate</name>
    </ligand>
</feature>
<feature type="binding site" evidence="1">
    <location>
        <position position="369"/>
    </location>
    <ligand>
        <name>substrate</name>
    </ligand>
</feature>
<feature type="site" description="Transition state stabilizer" evidence="1">
    <location>
        <position position="324"/>
    </location>
</feature>
<feature type="modified residue" description="N6,N6,N6-trimethyllysine" evidence="1">
    <location>
        <position position="4"/>
    </location>
</feature>
<feature type="modified residue" description="N6-carboxylysine" evidence="1">
    <location>
        <position position="191"/>
    </location>
</feature>
<feature type="disulfide bond" description="Interchain; in linked form" evidence="1">
    <location>
        <position position="237"/>
    </location>
</feature>
<feature type="non-terminal residue">
    <location>
        <position position="1"/>
    </location>
</feature>
<protein>
    <recommendedName>
        <fullName evidence="1">Ribulose bisphosphate carboxylase large chain</fullName>
        <shortName evidence="1">RuBisCO large subunit</shortName>
        <ecNumber evidence="1">4.1.1.39</ecNumber>
    </recommendedName>
</protein>
<proteinExistence type="inferred from homology"/>
<dbReference type="EC" id="4.1.1.39" evidence="1"/>
<dbReference type="EMBL" id="L01905">
    <property type="protein sequence ID" value="AAA84213.2"/>
    <property type="molecule type" value="Genomic_DNA"/>
</dbReference>
<dbReference type="SMR" id="P28402"/>
<dbReference type="GO" id="GO:0009507">
    <property type="term" value="C:chloroplast"/>
    <property type="evidence" value="ECO:0007669"/>
    <property type="project" value="UniProtKB-SubCell"/>
</dbReference>
<dbReference type="GO" id="GO:0000287">
    <property type="term" value="F:magnesium ion binding"/>
    <property type="evidence" value="ECO:0007669"/>
    <property type="project" value="InterPro"/>
</dbReference>
<dbReference type="GO" id="GO:0004497">
    <property type="term" value="F:monooxygenase activity"/>
    <property type="evidence" value="ECO:0007669"/>
    <property type="project" value="UniProtKB-KW"/>
</dbReference>
<dbReference type="GO" id="GO:0016984">
    <property type="term" value="F:ribulose-bisphosphate carboxylase activity"/>
    <property type="evidence" value="ECO:0007669"/>
    <property type="project" value="UniProtKB-EC"/>
</dbReference>
<dbReference type="GO" id="GO:0009853">
    <property type="term" value="P:photorespiration"/>
    <property type="evidence" value="ECO:0007669"/>
    <property type="project" value="UniProtKB-KW"/>
</dbReference>
<dbReference type="GO" id="GO:0019253">
    <property type="term" value="P:reductive pentose-phosphate cycle"/>
    <property type="evidence" value="ECO:0007669"/>
    <property type="project" value="UniProtKB-KW"/>
</dbReference>
<dbReference type="CDD" id="cd08212">
    <property type="entry name" value="RuBisCO_large_I"/>
    <property type="match status" value="1"/>
</dbReference>
<dbReference type="FunFam" id="3.20.20.110:FF:000001">
    <property type="entry name" value="Ribulose bisphosphate carboxylase large chain"/>
    <property type="match status" value="1"/>
</dbReference>
<dbReference type="FunFam" id="3.30.70.150:FF:000001">
    <property type="entry name" value="Ribulose bisphosphate carboxylase large chain"/>
    <property type="match status" value="1"/>
</dbReference>
<dbReference type="Gene3D" id="3.20.20.110">
    <property type="entry name" value="Ribulose bisphosphate carboxylase, large subunit, C-terminal domain"/>
    <property type="match status" value="1"/>
</dbReference>
<dbReference type="Gene3D" id="3.30.70.150">
    <property type="entry name" value="RuBisCO large subunit, N-terminal domain"/>
    <property type="match status" value="1"/>
</dbReference>
<dbReference type="HAMAP" id="MF_01338">
    <property type="entry name" value="RuBisCO_L_type1"/>
    <property type="match status" value="1"/>
</dbReference>
<dbReference type="InterPro" id="IPR033966">
    <property type="entry name" value="RuBisCO"/>
</dbReference>
<dbReference type="InterPro" id="IPR020878">
    <property type="entry name" value="RuBisCo_large_chain_AS"/>
</dbReference>
<dbReference type="InterPro" id="IPR000685">
    <property type="entry name" value="RuBisCO_lsu_C"/>
</dbReference>
<dbReference type="InterPro" id="IPR036376">
    <property type="entry name" value="RuBisCO_lsu_C_sf"/>
</dbReference>
<dbReference type="InterPro" id="IPR017443">
    <property type="entry name" value="RuBisCO_lsu_fd_N"/>
</dbReference>
<dbReference type="InterPro" id="IPR036422">
    <property type="entry name" value="RuBisCO_lsu_N_sf"/>
</dbReference>
<dbReference type="InterPro" id="IPR020888">
    <property type="entry name" value="RuBisCO_lsuI"/>
</dbReference>
<dbReference type="NCBIfam" id="NF003252">
    <property type="entry name" value="PRK04208.1"/>
    <property type="match status" value="1"/>
</dbReference>
<dbReference type="PANTHER" id="PTHR42704">
    <property type="entry name" value="RIBULOSE BISPHOSPHATE CARBOXYLASE"/>
    <property type="match status" value="1"/>
</dbReference>
<dbReference type="PANTHER" id="PTHR42704:SF15">
    <property type="entry name" value="RIBULOSE BISPHOSPHATE CARBOXYLASE LARGE CHAIN"/>
    <property type="match status" value="1"/>
</dbReference>
<dbReference type="Pfam" id="PF00016">
    <property type="entry name" value="RuBisCO_large"/>
    <property type="match status" value="1"/>
</dbReference>
<dbReference type="Pfam" id="PF02788">
    <property type="entry name" value="RuBisCO_large_N"/>
    <property type="match status" value="1"/>
</dbReference>
<dbReference type="SFLD" id="SFLDG01052">
    <property type="entry name" value="RuBisCO"/>
    <property type="match status" value="1"/>
</dbReference>
<dbReference type="SFLD" id="SFLDS00014">
    <property type="entry name" value="RuBisCO"/>
    <property type="match status" value="1"/>
</dbReference>
<dbReference type="SFLD" id="SFLDG00301">
    <property type="entry name" value="RuBisCO-like_proteins"/>
    <property type="match status" value="1"/>
</dbReference>
<dbReference type="SUPFAM" id="SSF51649">
    <property type="entry name" value="RuBisCo, C-terminal domain"/>
    <property type="match status" value="1"/>
</dbReference>
<dbReference type="SUPFAM" id="SSF54966">
    <property type="entry name" value="RuBisCO, large subunit, small (N-terminal) domain"/>
    <property type="match status" value="1"/>
</dbReference>
<dbReference type="PROSITE" id="PS00157">
    <property type="entry name" value="RUBISCO_LARGE"/>
    <property type="match status" value="1"/>
</dbReference>
<comment type="function">
    <text evidence="1">RuBisCO catalyzes two reactions: the carboxylation of D-ribulose 1,5-bisphosphate, the primary event in carbon dioxide fixation, as well as the oxidative fragmentation of the pentose substrate in the photorespiration process. Both reactions occur simultaneously and in competition at the same active site.</text>
</comment>
<comment type="catalytic activity">
    <reaction evidence="1">
        <text>2 (2R)-3-phosphoglycerate + 2 H(+) = D-ribulose 1,5-bisphosphate + CO2 + H2O</text>
        <dbReference type="Rhea" id="RHEA:23124"/>
        <dbReference type="ChEBI" id="CHEBI:15377"/>
        <dbReference type="ChEBI" id="CHEBI:15378"/>
        <dbReference type="ChEBI" id="CHEBI:16526"/>
        <dbReference type="ChEBI" id="CHEBI:57870"/>
        <dbReference type="ChEBI" id="CHEBI:58272"/>
        <dbReference type="EC" id="4.1.1.39"/>
    </reaction>
</comment>
<comment type="catalytic activity">
    <reaction evidence="1">
        <text>D-ribulose 1,5-bisphosphate + O2 = 2-phosphoglycolate + (2R)-3-phosphoglycerate + 2 H(+)</text>
        <dbReference type="Rhea" id="RHEA:36631"/>
        <dbReference type="ChEBI" id="CHEBI:15378"/>
        <dbReference type="ChEBI" id="CHEBI:15379"/>
        <dbReference type="ChEBI" id="CHEBI:57870"/>
        <dbReference type="ChEBI" id="CHEBI:58033"/>
        <dbReference type="ChEBI" id="CHEBI:58272"/>
    </reaction>
</comment>
<comment type="cofactor">
    <cofactor evidence="1">
        <name>Mg(2+)</name>
        <dbReference type="ChEBI" id="CHEBI:18420"/>
    </cofactor>
    <text evidence="1">Binds 1 Mg(2+) ion per subunit.</text>
</comment>
<comment type="subunit">
    <text evidence="1">Heterohexadecamer of 8 large chains and 8 small chains; disulfide-linked. The disulfide link is formed within the large subunit homodimers.</text>
</comment>
<comment type="subcellular location">
    <subcellularLocation>
        <location>Plastid</location>
        <location>Chloroplast</location>
    </subcellularLocation>
</comment>
<comment type="PTM">
    <text evidence="1">The disulfide bond which can form in the large chain dimeric partners within the hexadecamer appears to be associated with oxidative stress and protein turnover.</text>
</comment>
<comment type="miscellaneous">
    <text evidence="1">The basic functional RuBisCO is composed of a large chain homodimer in a 'head-to-tail' conformation. In form I RuBisCO this homodimer is arranged in a barrel-like tetramer with the small subunits forming a tetrameric 'cap' on each end of the 'barrel'.</text>
</comment>
<comment type="similarity">
    <text evidence="1">Belongs to the RuBisCO large chain family. Type I subfamily.</text>
</comment>
<geneLocation type="chloroplast"/>